<sequence>MSKSLNLEPIGKINGTVYLPGSKSISNRVLLLSALAAGKTRLTNFLDSDDTRYMLEALKALGVRYTVSKNGTCCEVEGVNGPLNTPHPIELMTGNAGTVMRFLTAVLSLGQSDVVLTGGARMKERPMDPLVDALRQGNAQITYLEKKNSPPLRLRGGFRGGNLTLRGNISSQFLTALLIMAPLAEQDTAIEVQGFLVSKPYVEMTLHLMRVFGISVTHKHYRTFNIKAHQKFKSPGHYRIEGDATAASYFLAAAAIKGGCVRVIGVGQKSIQGDVQFADVLQKMGAFIHWGEDYIECRPGRLKGIDMDMNSMPDAAMTLATTALFSEGPTRIQNIYNWRLKETDRLSAMSAELRKLGAQIKEGQDYIEIISPKNLKAAEIQTYNDHRIAMSFSLMALSDMPIRILNPRCTSKTFPDFFQKLAYLSGTV</sequence>
<comment type="function">
    <text evidence="1">Catalyzes the transfer of the enolpyruvyl moiety of phosphoenolpyruvate (PEP) to the 5-hydroxyl of shikimate-3-phosphate (S3P) to produce enolpyruvyl shikimate-3-phosphate and inorganic phosphate.</text>
</comment>
<comment type="catalytic activity">
    <reaction evidence="1">
        <text>3-phosphoshikimate + phosphoenolpyruvate = 5-O-(1-carboxyvinyl)-3-phosphoshikimate + phosphate</text>
        <dbReference type="Rhea" id="RHEA:21256"/>
        <dbReference type="ChEBI" id="CHEBI:43474"/>
        <dbReference type="ChEBI" id="CHEBI:57701"/>
        <dbReference type="ChEBI" id="CHEBI:58702"/>
        <dbReference type="ChEBI" id="CHEBI:145989"/>
        <dbReference type="EC" id="2.5.1.19"/>
    </reaction>
    <physiologicalReaction direction="left-to-right" evidence="1">
        <dbReference type="Rhea" id="RHEA:21257"/>
    </physiologicalReaction>
</comment>
<comment type="pathway">
    <text evidence="1">Metabolic intermediate biosynthesis; chorismate biosynthesis; chorismate from D-erythrose 4-phosphate and phosphoenolpyruvate: step 6/7.</text>
</comment>
<comment type="subunit">
    <text evidence="1">Monomer.</text>
</comment>
<comment type="subcellular location">
    <subcellularLocation>
        <location evidence="1">Cytoplasm</location>
    </subcellularLocation>
</comment>
<comment type="similarity">
    <text evidence="1">Belongs to the EPSP synthase family.</text>
</comment>
<keyword id="KW-0028">Amino-acid biosynthesis</keyword>
<keyword id="KW-0057">Aromatic amino acid biosynthesis</keyword>
<keyword id="KW-0963">Cytoplasm</keyword>
<keyword id="KW-0808">Transferase</keyword>
<reference key="1">
    <citation type="journal article" date="2009" name="Proc. Natl. Acad. Sci. U.S.A.">
        <title>Hamiltonella defensa, genome evolution of protective bacterial endosymbiont from pathogenic ancestors.</title>
        <authorList>
            <person name="Degnan P.H."/>
            <person name="Yu Y."/>
            <person name="Sisneros N."/>
            <person name="Wing R.A."/>
            <person name="Moran N.A."/>
        </authorList>
    </citation>
    <scope>NUCLEOTIDE SEQUENCE [LARGE SCALE GENOMIC DNA]</scope>
    <source>
        <strain>5AT</strain>
    </source>
</reference>
<proteinExistence type="inferred from homology"/>
<protein>
    <recommendedName>
        <fullName evidence="1">3-phosphoshikimate 1-carboxyvinyltransferase</fullName>
        <ecNumber evidence="1">2.5.1.19</ecNumber>
    </recommendedName>
    <alternativeName>
        <fullName evidence="1">5-enolpyruvylshikimate-3-phosphate synthase</fullName>
        <shortName evidence="1">EPSP synthase</shortName>
        <shortName evidence="1">EPSPS</shortName>
    </alternativeName>
</protein>
<dbReference type="EC" id="2.5.1.19" evidence="1"/>
<dbReference type="EMBL" id="CP001277">
    <property type="protein sequence ID" value="ACQ67427.1"/>
    <property type="molecule type" value="Genomic_DNA"/>
</dbReference>
<dbReference type="RefSeq" id="WP_015873248.1">
    <property type="nucleotide sequence ID" value="NC_012751.1"/>
</dbReference>
<dbReference type="SMR" id="C4K4D4"/>
<dbReference type="STRING" id="572265.HDEF_0694"/>
<dbReference type="GeneID" id="66260551"/>
<dbReference type="KEGG" id="hde:HDEF_0694"/>
<dbReference type="eggNOG" id="COG0128">
    <property type="taxonomic scope" value="Bacteria"/>
</dbReference>
<dbReference type="HOGENOM" id="CLU_024321_0_0_6"/>
<dbReference type="UniPathway" id="UPA00053">
    <property type="reaction ID" value="UER00089"/>
</dbReference>
<dbReference type="Proteomes" id="UP000002334">
    <property type="component" value="Chromosome"/>
</dbReference>
<dbReference type="GO" id="GO:0005737">
    <property type="term" value="C:cytoplasm"/>
    <property type="evidence" value="ECO:0007669"/>
    <property type="project" value="UniProtKB-SubCell"/>
</dbReference>
<dbReference type="GO" id="GO:0003866">
    <property type="term" value="F:3-phosphoshikimate 1-carboxyvinyltransferase activity"/>
    <property type="evidence" value="ECO:0007669"/>
    <property type="project" value="UniProtKB-UniRule"/>
</dbReference>
<dbReference type="GO" id="GO:0008652">
    <property type="term" value="P:amino acid biosynthetic process"/>
    <property type="evidence" value="ECO:0007669"/>
    <property type="project" value="UniProtKB-KW"/>
</dbReference>
<dbReference type="GO" id="GO:0009073">
    <property type="term" value="P:aromatic amino acid family biosynthetic process"/>
    <property type="evidence" value="ECO:0007669"/>
    <property type="project" value="UniProtKB-KW"/>
</dbReference>
<dbReference type="GO" id="GO:0009423">
    <property type="term" value="P:chorismate biosynthetic process"/>
    <property type="evidence" value="ECO:0007669"/>
    <property type="project" value="UniProtKB-UniRule"/>
</dbReference>
<dbReference type="CDD" id="cd01556">
    <property type="entry name" value="EPSP_synthase"/>
    <property type="match status" value="1"/>
</dbReference>
<dbReference type="FunFam" id="3.65.10.10:FF:000003">
    <property type="entry name" value="3-phosphoshikimate 1-carboxyvinyltransferase"/>
    <property type="match status" value="1"/>
</dbReference>
<dbReference type="FunFam" id="3.65.10.10:FF:000004">
    <property type="entry name" value="3-phosphoshikimate 1-carboxyvinyltransferase"/>
    <property type="match status" value="1"/>
</dbReference>
<dbReference type="Gene3D" id="3.65.10.10">
    <property type="entry name" value="Enolpyruvate transferase domain"/>
    <property type="match status" value="2"/>
</dbReference>
<dbReference type="HAMAP" id="MF_00210">
    <property type="entry name" value="EPSP_synth"/>
    <property type="match status" value="1"/>
</dbReference>
<dbReference type="InterPro" id="IPR001986">
    <property type="entry name" value="Enolpyruvate_Tfrase_dom"/>
</dbReference>
<dbReference type="InterPro" id="IPR036968">
    <property type="entry name" value="Enolpyruvate_Tfrase_sf"/>
</dbReference>
<dbReference type="InterPro" id="IPR006264">
    <property type="entry name" value="EPSP_synthase"/>
</dbReference>
<dbReference type="InterPro" id="IPR023193">
    <property type="entry name" value="EPSP_synthase_CS"/>
</dbReference>
<dbReference type="InterPro" id="IPR013792">
    <property type="entry name" value="RNA3'P_cycl/enolpyr_Trfase_a/b"/>
</dbReference>
<dbReference type="NCBIfam" id="TIGR01356">
    <property type="entry name" value="aroA"/>
    <property type="match status" value="1"/>
</dbReference>
<dbReference type="PANTHER" id="PTHR21090">
    <property type="entry name" value="AROM/DEHYDROQUINATE SYNTHASE"/>
    <property type="match status" value="1"/>
</dbReference>
<dbReference type="PANTHER" id="PTHR21090:SF5">
    <property type="entry name" value="PENTAFUNCTIONAL AROM POLYPEPTIDE"/>
    <property type="match status" value="1"/>
</dbReference>
<dbReference type="Pfam" id="PF00275">
    <property type="entry name" value="EPSP_synthase"/>
    <property type="match status" value="1"/>
</dbReference>
<dbReference type="PIRSF" id="PIRSF000505">
    <property type="entry name" value="EPSPS"/>
    <property type="match status" value="1"/>
</dbReference>
<dbReference type="SUPFAM" id="SSF55205">
    <property type="entry name" value="EPT/RTPC-like"/>
    <property type="match status" value="1"/>
</dbReference>
<dbReference type="PROSITE" id="PS00104">
    <property type="entry name" value="EPSP_SYNTHASE_1"/>
    <property type="match status" value="1"/>
</dbReference>
<dbReference type="PROSITE" id="PS00885">
    <property type="entry name" value="EPSP_SYNTHASE_2"/>
    <property type="match status" value="1"/>
</dbReference>
<gene>
    <name evidence="1" type="primary">aroA</name>
    <name type="ordered locus">HDEF_0694</name>
</gene>
<evidence type="ECO:0000255" key="1">
    <source>
        <dbReference type="HAMAP-Rule" id="MF_00210"/>
    </source>
</evidence>
<organism>
    <name type="scientific">Hamiltonella defensa subsp. Acyrthosiphon pisum (strain 5AT)</name>
    <dbReference type="NCBI Taxonomy" id="572265"/>
    <lineage>
        <taxon>Bacteria</taxon>
        <taxon>Pseudomonadati</taxon>
        <taxon>Pseudomonadota</taxon>
        <taxon>Gammaproteobacteria</taxon>
        <taxon>Enterobacterales</taxon>
        <taxon>Enterobacteriaceae</taxon>
        <taxon>aphid secondary symbionts</taxon>
        <taxon>Candidatus Hamiltonella</taxon>
    </lineage>
</organism>
<name>AROA_HAMD5</name>
<feature type="chain" id="PRO_1000204165" description="3-phosphoshikimate 1-carboxyvinyltransferase">
    <location>
        <begin position="1"/>
        <end position="428"/>
    </location>
</feature>
<feature type="active site" description="Proton acceptor" evidence="1">
    <location>
        <position position="314"/>
    </location>
</feature>
<feature type="binding site" evidence="1">
    <location>
        <position position="23"/>
    </location>
    <ligand>
        <name>3-phosphoshikimate</name>
        <dbReference type="ChEBI" id="CHEBI:145989"/>
    </ligand>
</feature>
<feature type="binding site" evidence="1">
    <location>
        <position position="23"/>
    </location>
    <ligand>
        <name>phosphoenolpyruvate</name>
        <dbReference type="ChEBI" id="CHEBI:58702"/>
    </ligand>
</feature>
<feature type="binding site" evidence="1">
    <location>
        <position position="24"/>
    </location>
    <ligand>
        <name>3-phosphoshikimate</name>
        <dbReference type="ChEBI" id="CHEBI:145989"/>
    </ligand>
</feature>
<feature type="binding site" evidence="1">
    <location>
        <position position="28"/>
    </location>
    <ligand>
        <name>3-phosphoshikimate</name>
        <dbReference type="ChEBI" id="CHEBI:145989"/>
    </ligand>
</feature>
<feature type="binding site" evidence="1">
    <location>
        <position position="97"/>
    </location>
    <ligand>
        <name>phosphoenolpyruvate</name>
        <dbReference type="ChEBI" id="CHEBI:58702"/>
    </ligand>
</feature>
<feature type="binding site" evidence="1">
    <location>
        <position position="125"/>
    </location>
    <ligand>
        <name>phosphoenolpyruvate</name>
        <dbReference type="ChEBI" id="CHEBI:58702"/>
    </ligand>
</feature>
<feature type="binding site" evidence="1">
    <location>
        <position position="170"/>
    </location>
    <ligand>
        <name>3-phosphoshikimate</name>
        <dbReference type="ChEBI" id="CHEBI:145989"/>
    </ligand>
</feature>
<feature type="binding site" evidence="1">
    <location>
        <position position="171"/>
    </location>
    <ligand>
        <name>3-phosphoshikimate</name>
        <dbReference type="ChEBI" id="CHEBI:145989"/>
    </ligand>
</feature>
<feature type="binding site" evidence="1">
    <location>
        <position position="172"/>
    </location>
    <ligand>
        <name>3-phosphoshikimate</name>
        <dbReference type="ChEBI" id="CHEBI:145989"/>
    </ligand>
</feature>
<feature type="binding site" evidence="1">
    <location>
        <position position="172"/>
    </location>
    <ligand>
        <name>phosphoenolpyruvate</name>
        <dbReference type="ChEBI" id="CHEBI:58702"/>
    </ligand>
</feature>
<feature type="binding site" evidence="1">
    <location>
        <position position="198"/>
    </location>
    <ligand>
        <name>3-phosphoshikimate</name>
        <dbReference type="ChEBI" id="CHEBI:145989"/>
    </ligand>
</feature>
<feature type="binding site" evidence="1">
    <location>
        <position position="314"/>
    </location>
    <ligand>
        <name>3-phosphoshikimate</name>
        <dbReference type="ChEBI" id="CHEBI:145989"/>
    </ligand>
</feature>
<feature type="binding site" evidence="1">
    <location>
        <position position="337"/>
    </location>
    <ligand>
        <name>3-phosphoshikimate</name>
        <dbReference type="ChEBI" id="CHEBI:145989"/>
    </ligand>
</feature>
<feature type="binding site" evidence="1">
    <location>
        <position position="341"/>
    </location>
    <ligand>
        <name>3-phosphoshikimate</name>
        <dbReference type="ChEBI" id="CHEBI:145989"/>
    </ligand>
</feature>
<feature type="binding site" evidence="1">
    <location>
        <position position="345"/>
    </location>
    <ligand>
        <name>phosphoenolpyruvate</name>
        <dbReference type="ChEBI" id="CHEBI:58702"/>
    </ligand>
</feature>
<feature type="binding site" evidence="1">
    <location>
        <position position="387"/>
    </location>
    <ligand>
        <name>phosphoenolpyruvate</name>
        <dbReference type="ChEBI" id="CHEBI:58702"/>
    </ligand>
</feature>
<feature type="binding site" evidence="1">
    <location>
        <position position="412"/>
    </location>
    <ligand>
        <name>phosphoenolpyruvate</name>
        <dbReference type="ChEBI" id="CHEBI:58702"/>
    </ligand>
</feature>
<accession>C4K4D4</accession>